<keyword id="KW-1003">Cell membrane</keyword>
<keyword id="KW-0325">Glycoprotein</keyword>
<keyword id="KW-0472">Membrane</keyword>
<keyword id="KW-1185">Reference proteome</keyword>
<keyword id="KW-0812">Transmembrane</keyword>
<keyword id="KW-1133">Transmembrane helix</keyword>
<keyword id="KW-0813">Transport</keyword>
<feature type="chain" id="PRO_0000450212" description="Proton myo-inositol cotransporter hmit-1.2">
    <location>
        <begin position="1"/>
        <end position="613"/>
    </location>
</feature>
<feature type="topological domain" description="Cytoplasmic" evidence="7">
    <location>
        <begin position="1"/>
        <end position="21"/>
    </location>
</feature>
<feature type="transmembrane region" description="Helical; Name=1" evidence="2">
    <location>
        <begin position="22"/>
        <end position="42"/>
    </location>
</feature>
<feature type="topological domain" description="Extracellular" evidence="7">
    <location>
        <begin position="43"/>
        <end position="69"/>
    </location>
</feature>
<feature type="transmembrane region" description="Helical; Name=2" evidence="2">
    <location>
        <begin position="70"/>
        <end position="90"/>
    </location>
</feature>
<feature type="topological domain" description="Cytoplasmic" evidence="7">
    <location>
        <begin position="91"/>
        <end position="96"/>
    </location>
</feature>
<feature type="transmembrane region" description="Helical; Name=3" evidence="2">
    <location>
        <begin position="97"/>
        <end position="117"/>
    </location>
</feature>
<feature type="topological domain" description="Extracellular" evidence="7">
    <location>
        <begin position="118"/>
        <end position="119"/>
    </location>
</feature>
<feature type="transmembrane region" description="Helical; Name=4" evidence="2">
    <location>
        <begin position="120"/>
        <end position="140"/>
    </location>
</feature>
<feature type="topological domain" description="Cytoplasmic" evidence="7">
    <location>
        <begin position="141"/>
        <end position="157"/>
    </location>
</feature>
<feature type="transmembrane region" description="Helical; Name=5" evidence="2">
    <location>
        <begin position="158"/>
        <end position="178"/>
    </location>
</feature>
<feature type="topological domain" description="Extracellular" evidence="7">
    <location>
        <begin position="179"/>
        <end position="189"/>
    </location>
</feature>
<feature type="transmembrane region" description="Helical; Name=6" evidence="2">
    <location>
        <begin position="190"/>
        <end position="210"/>
    </location>
</feature>
<feature type="topological domain" description="Cytoplasmic" evidence="7">
    <location>
        <begin position="211"/>
        <end position="279"/>
    </location>
</feature>
<feature type="transmembrane region" description="Helical; Name=7" evidence="2">
    <location>
        <begin position="280"/>
        <end position="300"/>
    </location>
</feature>
<feature type="topological domain" description="Extracellular" evidence="7">
    <location>
        <begin position="301"/>
        <end position="317"/>
    </location>
</feature>
<feature type="transmembrane region" description="Helical; Name=8" evidence="2">
    <location>
        <begin position="318"/>
        <end position="338"/>
    </location>
</feature>
<feature type="topological domain" description="Cytoplasmic" evidence="7">
    <location>
        <begin position="339"/>
        <end position="347"/>
    </location>
</feature>
<feature type="transmembrane region" description="Helical; Name=9" evidence="2">
    <location>
        <begin position="348"/>
        <end position="368"/>
    </location>
</feature>
<feature type="topological domain" description="Extracellular" evidence="7">
    <location>
        <begin position="369"/>
        <end position="472"/>
    </location>
</feature>
<feature type="transmembrane region" description="Helical; Name=10" evidence="2">
    <location>
        <begin position="473"/>
        <end position="493"/>
    </location>
</feature>
<feature type="topological domain" description="Cytoplasmic" evidence="7">
    <location>
        <begin position="494"/>
        <end position="515"/>
    </location>
</feature>
<feature type="transmembrane region" description="Helical; Name=11" evidence="2">
    <location>
        <begin position="516"/>
        <end position="536"/>
    </location>
</feature>
<feature type="topological domain" description="Extracellular" evidence="7">
    <location>
        <begin position="537"/>
        <end position="539"/>
    </location>
</feature>
<feature type="transmembrane region" description="Helical; Name=12" evidence="2">
    <location>
        <begin position="540"/>
        <end position="560"/>
    </location>
</feature>
<feature type="topological domain" description="Cytoplasmic" evidence="7">
    <location>
        <begin position="561"/>
        <end position="613"/>
    </location>
</feature>
<feature type="region of interest" description="Disordered" evidence="5">
    <location>
        <begin position="594"/>
        <end position="613"/>
    </location>
</feature>
<feature type="compositionally biased region" description="Polar residues" evidence="5">
    <location>
        <begin position="602"/>
        <end position="613"/>
    </location>
</feature>
<feature type="glycosylation site" description="N-linked (GlcNAc...) asparagine" evidence="3">
    <location>
        <position position="372"/>
    </location>
</feature>
<feature type="glycosylation site" description="N-linked (GlcNAc...) asparagine" evidence="3">
    <location>
        <position position="451"/>
    </location>
</feature>
<feature type="glycosylation site" description="N-linked (GlcNAc...) asparagine" evidence="3">
    <location>
        <position position="456"/>
    </location>
</feature>
<sequence length="613" mass="67886">MVAVEFKVSESGRPRPEKNPKLGFFVYLLGSAAIIGGFLFGYDTSVVSAAMLYVPEAPGLKPMGTVWKEVIVSITPGMAAVGAWFSGAGSDRYGRKPIIIGSTLIFVCGAVICAVAWTKIVMLIGRIFLGVGIGFASMVVPVYLGEASPTHVRGTLVSAFAMMISFGQVVANIMGGVFSYWEPYTIGWRLMFAFAGIPALIQFVCFIFLPETPRWLYENGHTEQAEQVLEKIYGGNTEWIEYELAEIKTYAEERQKQMEEEKKSGPVIWRILKTPHVLKACFIGSMLQAFQQLAGINTILYYTADIIRSAGIENYHTIIWISVILSICNLIGPFAPMFFIEKLGRRKLFLFSCAGVVVSLVLIGVSFLLVGNDSAPNFDRSAYLLAGNYQSNGEAESCLMLSNCDSCVTSEHCGFCEDSETRTGFCLPVDHNDVTLYSSTGLCTNGLDKSNSSFPNATSYVWQKHHCTTSYTILPIVMMGVYLLTFSCGFTSLPWVLNSEFYPMWARSTCVSISTLSNWVFNLIIALTYLSLTHAITKYGAFWLYAIFTIIAFIFIYFLVPETTGYSIDEVEMLFMNKRQRNIAMQARQAKLDAASDKDKNSSTSLSTETITM</sequence>
<dbReference type="EMBL" id="BX284605">
    <property type="protein sequence ID" value="CAA16405.1"/>
    <property type="molecule type" value="Genomic_DNA"/>
</dbReference>
<dbReference type="PIR" id="T27077">
    <property type="entry name" value="T27077"/>
</dbReference>
<dbReference type="RefSeq" id="NP_507624.1">
    <property type="nucleotide sequence ID" value="NM_075223.6"/>
</dbReference>
<dbReference type="SMR" id="Q9XXQ9"/>
<dbReference type="FunCoup" id="Q9XXQ9">
    <property type="interactions" value="488"/>
</dbReference>
<dbReference type="STRING" id="6239.Y51A2D.5.1"/>
<dbReference type="GlyCosmos" id="Q9XXQ9">
    <property type="glycosylation" value="3 sites, No reported glycans"/>
</dbReference>
<dbReference type="PaxDb" id="6239-Y51A2D.5"/>
<dbReference type="PeptideAtlas" id="Q9XXQ9"/>
<dbReference type="EnsemblMetazoa" id="Y51A2D.5.1">
    <property type="protein sequence ID" value="Y51A2D.5.1"/>
    <property type="gene ID" value="WBGene00013074"/>
</dbReference>
<dbReference type="GeneID" id="180206"/>
<dbReference type="KEGG" id="cel:CELE_Y51A2D.5"/>
<dbReference type="UCSC" id="Y51A2D.5">
    <property type="organism name" value="c. elegans"/>
</dbReference>
<dbReference type="AGR" id="WB:WBGene00013074"/>
<dbReference type="CTD" id="180206"/>
<dbReference type="WormBase" id="Y51A2D.5">
    <property type="protein sequence ID" value="CE19202"/>
    <property type="gene ID" value="WBGene00013074"/>
    <property type="gene designation" value="hmit-1.2"/>
</dbReference>
<dbReference type="eggNOG" id="KOG0254">
    <property type="taxonomic scope" value="Eukaryota"/>
</dbReference>
<dbReference type="GeneTree" id="ENSGT00970000196599"/>
<dbReference type="HOGENOM" id="CLU_001265_30_5_1"/>
<dbReference type="InParanoid" id="Q9XXQ9"/>
<dbReference type="OMA" id="ETGWRWM"/>
<dbReference type="OrthoDB" id="6339427at2759"/>
<dbReference type="PhylomeDB" id="Q9XXQ9"/>
<dbReference type="PRO" id="PR:Q9XXQ9"/>
<dbReference type="Proteomes" id="UP000001940">
    <property type="component" value="Chromosome V"/>
</dbReference>
<dbReference type="Bgee" id="WBGene00013074">
    <property type="expression patterns" value="Expressed in adult organism and 2 other cell types or tissues"/>
</dbReference>
<dbReference type="GO" id="GO:0016324">
    <property type="term" value="C:apical plasma membrane"/>
    <property type="evidence" value="ECO:0000314"/>
    <property type="project" value="WormBase"/>
</dbReference>
<dbReference type="GO" id="GO:0009925">
    <property type="term" value="C:basal plasma membrane"/>
    <property type="evidence" value="ECO:0000314"/>
    <property type="project" value="WormBase"/>
</dbReference>
<dbReference type="GO" id="GO:0043204">
    <property type="term" value="C:perikaryon"/>
    <property type="evidence" value="ECO:0007669"/>
    <property type="project" value="UniProtKB-SubCell"/>
</dbReference>
<dbReference type="GO" id="GO:0005366">
    <property type="term" value="F:myo-inositol:proton symporter activity"/>
    <property type="evidence" value="ECO:0000318"/>
    <property type="project" value="GO_Central"/>
</dbReference>
<dbReference type="GO" id="GO:0015798">
    <property type="term" value="P:myo-inositol transport"/>
    <property type="evidence" value="ECO:0000318"/>
    <property type="project" value="GO_Central"/>
</dbReference>
<dbReference type="GO" id="GO:0055085">
    <property type="term" value="P:transmembrane transport"/>
    <property type="evidence" value="ECO:0000318"/>
    <property type="project" value="GO_Central"/>
</dbReference>
<dbReference type="CDD" id="cd22249">
    <property type="entry name" value="UDM1_RNF168_RNF169-like"/>
    <property type="match status" value="1"/>
</dbReference>
<dbReference type="FunFam" id="1.20.1250.20:FF:000371">
    <property type="entry name" value="H(+) MyoInositol coTransporter"/>
    <property type="match status" value="1"/>
</dbReference>
<dbReference type="FunFam" id="1.20.1250.20:FF:000387">
    <property type="entry name" value="H(+) MyoInositol coTransporter"/>
    <property type="match status" value="1"/>
</dbReference>
<dbReference type="Gene3D" id="1.20.1250.20">
    <property type="entry name" value="MFS general substrate transporter like domains"/>
    <property type="match status" value="2"/>
</dbReference>
<dbReference type="InterPro" id="IPR020846">
    <property type="entry name" value="MFS_dom"/>
</dbReference>
<dbReference type="InterPro" id="IPR005828">
    <property type="entry name" value="MFS_sugar_transport-like"/>
</dbReference>
<dbReference type="InterPro" id="IPR036259">
    <property type="entry name" value="MFS_trans_sf"/>
</dbReference>
<dbReference type="InterPro" id="IPR050814">
    <property type="entry name" value="Myo-inositol_Transporter"/>
</dbReference>
<dbReference type="InterPro" id="IPR003663">
    <property type="entry name" value="Sugar/inositol_transpt"/>
</dbReference>
<dbReference type="InterPro" id="IPR005829">
    <property type="entry name" value="Sugar_transporter_CS"/>
</dbReference>
<dbReference type="NCBIfam" id="TIGR00879">
    <property type="entry name" value="SP"/>
    <property type="match status" value="1"/>
</dbReference>
<dbReference type="PANTHER" id="PTHR48020">
    <property type="entry name" value="PROTON MYO-INOSITOL COTRANSPORTER"/>
    <property type="match status" value="1"/>
</dbReference>
<dbReference type="PANTHER" id="PTHR48020:SF11">
    <property type="entry name" value="PROTON MYO-INOSITOL COTRANSPORTER HMIT-1.2"/>
    <property type="match status" value="1"/>
</dbReference>
<dbReference type="Pfam" id="PF00083">
    <property type="entry name" value="Sugar_tr"/>
    <property type="match status" value="2"/>
</dbReference>
<dbReference type="PRINTS" id="PR00171">
    <property type="entry name" value="SUGRTRNSPORT"/>
</dbReference>
<dbReference type="SUPFAM" id="SSF103473">
    <property type="entry name" value="MFS general substrate transporter"/>
    <property type="match status" value="1"/>
</dbReference>
<dbReference type="PROSITE" id="PS50850">
    <property type="entry name" value="MFS"/>
    <property type="match status" value="1"/>
</dbReference>
<dbReference type="PROSITE" id="PS00216">
    <property type="entry name" value="SUGAR_TRANSPORT_1"/>
    <property type="match status" value="1"/>
</dbReference>
<dbReference type="PROSITE" id="PS00217">
    <property type="entry name" value="SUGAR_TRANSPORT_2"/>
    <property type="match status" value="1"/>
</dbReference>
<comment type="function">
    <text evidence="1 6">H(+)-myo-inositol cotransporter (By similarity). Probably by promoting the transport of myo-inositol regulates intracellular osmosis in response to hyperosmotic stress (PubMed:21679696).</text>
</comment>
<comment type="catalytic activity">
    <reaction evidence="1">
        <text>myo-inositol(out) + H(+)(out) = myo-inositol(in) + H(+)(in)</text>
        <dbReference type="Rhea" id="RHEA:60364"/>
        <dbReference type="ChEBI" id="CHEBI:15378"/>
        <dbReference type="ChEBI" id="CHEBI:17268"/>
    </reaction>
</comment>
<comment type="subcellular location">
    <subcellularLocation>
        <location evidence="6">Cell membrane</location>
        <topology evidence="2">Multi-pass membrane protein</topology>
    </subcellularLocation>
    <subcellularLocation>
        <location evidence="6">Perikaryon</location>
    </subcellularLocation>
    <text evidence="6">Localizes to the lumenal side of intestinal cells (PubMed:21679696). Localizes to the endfoot region of glial cells where the cilia of sensory neurons are embedded (PubMed:21679696). In the excretory canal cell, localizes to the basal membrane of the distal canal and at the lumenal membrane of the proximal canal (PubMed:21679696).</text>
</comment>
<comment type="tissue specificity">
    <text evidence="6">Expressed in the excretory canal cell and in pairs of amphid and sheath glia.</text>
</comment>
<comment type="induction">
    <text evidence="6">Induced by hyperosmotic stress.</text>
</comment>
<comment type="similarity">
    <text evidence="2 4">Belongs to the major facilitator superfamily. Sugar transporter (TC 2.A.1.1) family.</text>
</comment>
<protein>
    <recommendedName>
        <fullName evidence="7">Proton myo-inositol cotransporter hmit-1.2</fullName>
        <shortName evidence="9">H(+)-myo-inositol cotransporter hmit-1.2</shortName>
    </recommendedName>
    <alternativeName>
        <fullName evidence="1">H(+)-myo-inositol symporter hmit-1.2</fullName>
    </alternativeName>
</protein>
<accession>Q9XXQ9</accession>
<reference evidence="8" key="1">
    <citation type="journal article" date="1998" name="Science">
        <title>Genome sequence of the nematode C. elegans: a platform for investigating biology.</title>
        <authorList>
            <consortium name="The C. elegans sequencing consortium"/>
        </authorList>
    </citation>
    <scope>NUCLEOTIDE SEQUENCE [LARGE SCALE GENOMIC DNA]</scope>
    <source>
        <strain evidence="8">Bristol N2</strain>
    </source>
</reference>
<reference evidence="7" key="2">
    <citation type="journal article" date="2011" name="Biochem. Biophys. Res. Commun.">
        <title>H+/myo-inositol transporter genes, hmit-1.1 and hmit-1.2, have roles in the osmoprotective response in Caenorhabditis elegans.</title>
        <authorList>
            <person name="Kage-Nakadai E."/>
            <person name="Uehara T."/>
            <person name="Mitani S."/>
        </authorList>
    </citation>
    <scope>FUNCTION</scope>
    <scope>SUBCELLULAR LOCATION</scope>
    <scope>TISSUE SPECIFICITY</scope>
    <scope>INDUCTION</scope>
</reference>
<evidence type="ECO:0000250" key="1">
    <source>
        <dbReference type="UniProtKB" id="Q96QE2"/>
    </source>
</evidence>
<evidence type="ECO:0000255" key="2"/>
<evidence type="ECO:0000255" key="3">
    <source>
        <dbReference type="PROSITE-ProRule" id="PRU00498"/>
    </source>
</evidence>
<evidence type="ECO:0000255" key="4">
    <source>
        <dbReference type="RuleBase" id="RU003346"/>
    </source>
</evidence>
<evidence type="ECO:0000256" key="5">
    <source>
        <dbReference type="SAM" id="MobiDB-lite"/>
    </source>
</evidence>
<evidence type="ECO:0000269" key="6">
    <source>
    </source>
</evidence>
<evidence type="ECO:0000305" key="7"/>
<evidence type="ECO:0000312" key="8">
    <source>
        <dbReference type="Proteomes" id="UP000001940"/>
    </source>
</evidence>
<evidence type="ECO:0000312" key="9">
    <source>
        <dbReference type="WormBase" id="Y51A2D.5"/>
    </source>
</evidence>
<proteinExistence type="evidence at transcript level"/>
<gene>
    <name evidence="9" type="primary">hmit-1.2</name>
    <name evidence="9" type="ORF">Y51A2D.5</name>
</gene>
<organism evidence="8">
    <name type="scientific">Caenorhabditis elegans</name>
    <dbReference type="NCBI Taxonomy" id="6239"/>
    <lineage>
        <taxon>Eukaryota</taxon>
        <taxon>Metazoa</taxon>
        <taxon>Ecdysozoa</taxon>
        <taxon>Nematoda</taxon>
        <taxon>Chromadorea</taxon>
        <taxon>Rhabditida</taxon>
        <taxon>Rhabditina</taxon>
        <taxon>Rhabditomorpha</taxon>
        <taxon>Rhabditoidea</taxon>
        <taxon>Rhabditidae</taxon>
        <taxon>Peloderinae</taxon>
        <taxon>Caenorhabditis</taxon>
    </lineage>
</organism>
<name>HMT12_CAEEL</name>